<name>MURG_KLEP7</name>
<accession>A6T4N3</accession>
<reference key="1">
    <citation type="submission" date="2006-09" db="EMBL/GenBank/DDBJ databases">
        <authorList>
            <consortium name="The Klebsiella pneumonia Genome Sequencing Project"/>
            <person name="McClelland M."/>
            <person name="Sanderson E.K."/>
            <person name="Spieth J."/>
            <person name="Clifton W.S."/>
            <person name="Latreille P."/>
            <person name="Sabo A."/>
            <person name="Pepin K."/>
            <person name="Bhonagiri V."/>
            <person name="Porwollik S."/>
            <person name="Ali J."/>
            <person name="Wilson R.K."/>
        </authorList>
    </citation>
    <scope>NUCLEOTIDE SEQUENCE [LARGE SCALE GENOMIC DNA]</scope>
    <source>
        <strain>ATCC 700721 / MGH 78578</strain>
    </source>
</reference>
<comment type="function">
    <text evidence="1">Cell wall formation. Catalyzes the transfer of a GlcNAc subunit on undecaprenyl-pyrophosphoryl-MurNAc-pentapeptide (lipid intermediate I) to form undecaprenyl-pyrophosphoryl-MurNAc-(pentapeptide)GlcNAc (lipid intermediate II).</text>
</comment>
<comment type="catalytic activity">
    <reaction evidence="1">
        <text>di-trans,octa-cis-undecaprenyl diphospho-N-acetyl-alpha-D-muramoyl-L-alanyl-D-glutamyl-meso-2,6-diaminopimeloyl-D-alanyl-D-alanine + UDP-N-acetyl-alpha-D-glucosamine = di-trans,octa-cis-undecaprenyl diphospho-[N-acetyl-alpha-D-glucosaminyl-(1-&gt;4)]-N-acetyl-alpha-D-muramoyl-L-alanyl-D-glutamyl-meso-2,6-diaminopimeloyl-D-alanyl-D-alanine + UDP + H(+)</text>
        <dbReference type="Rhea" id="RHEA:31227"/>
        <dbReference type="ChEBI" id="CHEBI:15378"/>
        <dbReference type="ChEBI" id="CHEBI:57705"/>
        <dbReference type="ChEBI" id="CHEBI:58223"/>
        <dbReference type="ChEBI" id="CHEBI:61387"/>
        <dbReference type="ChEBI" id="CHEBI:61388"/>
        <dbReference type="EC" id="2.4.1.227"/>
    </reaction>
</comment>
<comment type="pathway">
    <text evidence="1">Cell wall biogenesis; peptidoglycan biosynthesis.</text>
</comment>
<comment type="subcellular location">
    <subcellularLocation>
        <location evidence="1">Cell inner membrane</location>
        <topology evidence="1">Peripheral membrane protein</topology>
        <orientation evidence="1">Cytoplasmic side</orientation>
    </subcellularLocation>
</comment>
<comment type="similarity">
    <text evidence="1">Belongs to the glycosyltransferase 28 family. MurG subfamily.</text>
</comment>
<organism>
    <name type="scientific">Klebsiella pneumoniae subsp. pneumoniae (strain ATCC 700721 / MGH 78578)</name>
    <dbReference type="NCBI Taxonomy" id="272620"/>
    <lineage>
        <taxon>Bacteria</taxon>
        <taxon>Pseudomonadati</taxon>
        <taxon>Pseudomonadota</taxon>
        <taxon>Gammaproteobacteria</taxon>
        <taxon>Enterobacterales</taxon>
        <taxon>Enterobacteriaceae</taxon>
        <taxon>Klebsiella/Raoultella group</taxon>
        <taxon>Klebsiella</taxon>
        <taxon>Klebsiella pneumoniae complex</taxon>
    </lineage>
</organism>
<keyword id="KW-0131">Cell cycle</keyword>
<keyword id="KW-0132">Cell division</keyword>
<keyword id="KW-0997">Cell inner membrane</keyword>
<keyword id="KW-1003">Cell membrane</keyword>
<keyword id="KW-0133">Cell shape</keyword>
<keyword id="KW-0961">Cell wall biogenesis/degradation</keyword>
<keyword id="KW-0328">Glycosyltransferase</keyword>
<keyword id="KW-0472">Membrane</keyword>
<keyword id="KW-0573">Peptidoglycan synthesis</keyword>
<keyword id="KW-0808">Transferase</keyword>
<proteinExistence type="inferred from homology"/>
<protein>
    <recommendedName>
        <fullName evidence="1">UDP-N-acetylglucosamine--N-acetylmuramyl-(pentapeptide) pyrophosphoryl-undecaprenol N-acetylglucosamine transferase</fullName>
        <ecNumber evidence="1">2.4.1.227</ecNumber>
    </recommendedName>
    <alternativeName>
        <fullName evidence="1">Undecaprenyl-PP-MurNAc-pentapeptide-UDPGlcNAc GlcNAc transferase</fullName>
    </alternativeName>
</protein>
<feature type="chain" id="PRO_1000002657" description="UDP-N-acetylglucosamine--N-acetylmuramyl-(pentapeptide) pyrophosphoryl-undecaprenol N-acetylglucosamine transferase">
    <location>
        <begin position="1"/>
        <end position="356"/>
    </location>
</feature>
<feature type="binding site" evidence="1">
    <location>
        <begin position="15"/>
        <end position="17"/>
    </location>
    <ligand>
        <name>UDP-N-acetyl-alpha-D-glucosamine</name>
        <dbReference type="ChEBI" id="CHEBI:57705"/>
    </ligand>
</feature>
<feature type="binding site" evidence="1">
    <location>
        <position position="127"/>
    </location>
    <ligand>
        <name>UDP-N-acetyl-alpha-D-glucosamine</name>
        <dbReference type="ChEBI" id="CHEBI:57705"/>
    </ligand>
</feature>
<feature type="binding site" evidence="1">
    <location>
        <position position="163"/>
    </location>
    <ligand>
        <name>UDP-N-acetyl-alpha-D-glucosamine</name>
        <dbReference type="ChEBI" id="CHEBI:57705"/>
    </ligand>
</feature>
<feature type="binding site" evidence="1">
    <location>
        <position position="191"/>
    </location>
    <ligand>
        <name>UDP-N-acetyl-alpha-D-glucosamine</name>
        <dbReference type="ChEBI" id="CHEBI:57705"/>
    </ligand>
</feature>
<feature type="binding site" evidence="1">
    <location>
        <position position="244"/>
    </location>
    <ligand>
        <name>UDP-N-acetyl-alpha-D-glucosamine</name>
        <dbReference type="ChEBI" id="CHEBI:57705"/>
    </ligand>
</feature>
<feature type="binding site" evidence="1">
    <location>
        <begin position="263"/>
        <end position="268"/>
    </location>
    <ligand>
        <name>UDP-N-acetyl-alpha-D-glucosamine</name>
        <dbReference type="ChEBI" id="CHEBI:57705"/>
    </ligand>
</feature>
<feature type="binding site" evidence="1">
    <location>
        <position position="288"/>
    </location>
    <ligand>
        <name>UDP-N-acetyl-alpha-D-glucosamine</name>
        <dbReference type="ChEBI" id="CHEBI:57705"/>
    </ligand>
</feature>
<evidence type="ECO:0000255" key="1">
    <source>
        <dbReference type="HAMAP-Rule" id="MF_00033"/>
    </source>
</evidence>
<gene>
    <name evidence="1" type="primary">murG</name>
    <name type="ordered locus">KPN78578_00930</name>
    <name type="ORF">KPN_00094</name>
</gene>
<dbReference type="EC" id="2.4.1.227" evidence="1"/>
<dbReference type="EMBL" id="CP000647">
    <property type="protein sequence ID" value="ABR75554.1"/>
    <property type="molecule type" value="Genomic_DNA"/>
</dbReference>
<dbReference type="RefSeq" id="WP_002888566.1">
    <property type="nucleotide sequence ID" value="NC_009648.1"/>
</dbReference>
<dbReference type="SMR" id="A6T4N3"/>
<dbReference type="STRING" id="272620.KPN_00094"/>
<dbReference type="CAZy" id="GT28">
    <property type="family name" value="Glycosyltransferase Family 28"/>
</dbReference>
<dbReference type="PaxDb" id="272620-KPN_00094"/>
<dbReference type="EnsemblBacteria" id="ABR75554">
    <property type="protein sequence ID" value="ABR75554"/>
    <property type="gene ID" value="KPN_00094"/>
</dbReference>
<dbReference type="KEGG" id="kpn:KPN_00094"/>
<dbReference type="HOGENOM" id="CLU_037404_2_0_6"/>
<dbReference type="UniPathway" id="UPA00219"/>
<dbReference type="Proteomes" id="UP000000265">
    <property type="component" value="Chromosome"/>
</dbReference>
<dbReference type="GO" id="GO:0005886">
    <property type="term" value="C:plasma membrane"/>
    <property type="evidence" value="ECO:0007669"/>
    <property type="project" value="UniProtKB-SubCell"/>
</dbReference>
<dbReference type="GO" id="GO:0051991">
    <property type="term" value="F:UDP-N-acetyl-D-glucosamine:N-acetylmuramoyl-L-alanyl-D-glutamyl-meso-2,6-diaminopimelyl-D-alanyl-D-alanine-diphosphoundecaprenol 4-beta-N-acetylglucosaminlytransferase activity"/>
    <property type="evidence" value="ECO:0007669"/>
    <property type="project" value="RHEA"/>
</dbReference>
<dbReference type="GO" id="GO:0050511">
    <property type="term" value="F:undecaprenyldiphospho-muramoylpentapeptide beta-N-acetylglucosaminyltransferase activity"/>
    <property type="evidence" value="ECO:0007669"/>
    <property type="project" value="UniProtKB-UniRule"/>
</dbReference>
<dbReference type="GO" id="GO:0005975">
    <property type="term" value="P:carbohydrate metabolic process"/>
    <property type="evidence" value="ECO:0007669"/>
    <property type="project" value="InterPro"/>
</dbReference>
<dbReference type="GO" id="GO:0051301">
    <property type="term" value="P:cell division"/>
    <property type="evidence" value="ECO:0007669"/>
    <property type="project" value="UniProtKB-KW"/>
</dbReference>
<dbReference type="GO" id="GO:0071555">
    <property type="term" value="P:cell wall organization"/>
    <property type="evidence" value="ECO:0007669"/>
    <property type="project" value="UniProtKB-KW"/>
</dbReference>
<dbReference type="GO" id="GO:0030259">
    <property type="term" value="P:lipid glycosylation"/>
    <property type="evidence" value="ECO:0007669"/>
    <property type="project" value="UniProtKB-UniRule"/>
</dbReference>
<dbReference type="GO" id="GO:0009252">
    <property type="term" value="P:peptidoglycan biosynthetic process"/>
    <property type="evidence" value="ECO:0007669"/>
    <property type="project" value="UniProtKB-UniRule"/>
</dbReference>
<dbReference type="GO" id="GO:0008360">
    <property type="term" value="P:regulation of cell shape"/>
    <property type="evidence" value="ECO:0007669"/>
    <property type="project" value="UniProtKB-KW"/>
</dbReference>
<dbReference type="CDD" id="cd03785">
    <property type="entry name" value="GT28_MurG"/>
    <property type="match status" value="1"/>
</dbReference>
<dbReference type="FunFam" id="3.40.50.2000:FF:000016">
    <property type="entry name" value="UDP-N-acetylglucosamine--N-acetylmuramyl-(pentapeptide) pyrophosphoryl-undecaprenol N-acetylglucosamine transferase"/>
    <property type="match status" value="1"/>
</dbReference>
<dbReference type="FunFam" id="3.40.50.2000:FF:000018">
    <property type="entry name" value="UDP-N-acetylglucosamine--N-acetylmuramyl-(pentapeptide) pyrophosphoryl-undecaprenol N-acetylglucosamine transferase"/>
    <property type="match status" value="1"/>
</dbReference>
<dbReference type="Gene3D" id="3.40.50.2000">
    <property type="entry name" value="Glycogen Phosphorylase B"/>
    <property type="match status" value="2"/>
</dbReference>
<dbReference type="HAMAP" id="MF_00033">
    <property type="entry name" value="MurG"/>
    <property type="match status" value="1"/>
</dbReference>
<dbReference type="InterPro" id="IPR006009">
    <property type="entry name" value="GlcNAc_MurG"/>
</dbReference>
<dbReference type="InterPro" id="IPR007235">
    <property type="entry name" value="Glyco_trans_28_C"/>
</dbReference>
<dbReference type="InterPro" id="IPR004276">
    <property type="entry name" value="GlycoTrans_28_N"/>
</dbReference>
<dbReference type="NCBIfam" id="TIGR01133">
    <property type="entry name" value="murG"/>
    <property type="match status" value="1"/>
</dbReference>
<dbReference type="PANTHER" id="PTHR21015:SF22">
    <property type="entry name" value="GLYCOSYLTRANSFERASE"/>
    <property type="match status" value="1"/>
</dbReference>
<dbReference type="PANTHER" id="PTHR21015">
    <property type="entry name" value="UDP-N-ACETYLGLUCOSAMINE--N-ACETYLMURAMYL-(PENTAPEPTIDE) PYROPHOSPHORYL-UNDECAPRENOL N-ACETYLGLUCOSAMINE TRANSFERASE 1"/>
    <property type="match status" value="1"/>
</dbReference>
<dbReference type="Pfam" id="PF04101">
    <property type="entry name" value="Glyco_tran_28_C"/>
    <property type="match status" value="1"/>
</dbReference>
<dbReference type="Pfam" id="PF03033">
    <property type="entry name" value="Glyco_transf_28"/>
    <property type="match status" value="1"/>
</dbReference>
<dbReference type="SUPFAM" id="SSF53756">
    <property type="entry name" value="UDP-Glycosyltransferase/glycogen phosphorylase"/>
    <property type="match status" value="1"/>
</dbReference>
<sequence length="356" mass="38044">MSGQEKRLMVMAGGTGGHVFPGLAVAHHLMDQGWQVRWLGTADRMEADLVPKNGIEIDFIRISGLRGKGIKAQLLAPVRIFNAWRQARAIMKRFQPDVVLGMGGYVSGPGGLAAWSLGIPVVLHEQNGIAGLTNKWLAKIAKKVMQAFPGAFPHADVVGNPVRTDVLALPLPGQRLVGRQGPIRVLVVGGSQGARVLNQTMPQVAAKLGATVTIWHQSGKGGQQTVQQAYAAAGQPQHKVTEFIDDMAAAYAWADVVVCRSGALTVSEIAAAGLPALFVPFQHKDRQQYWNALPLEKAGAAKILEQPEFTVEAVASTLASWDRETLLDMAERARGASIPDATERVAEEVSAVALAR</sequence>